<reference key="1">
    <citation type="journal article" date="2009" name="Appl. Environ. Microbiol.">
        <title>Three genomes from the phylum Acidobacteria provide insight into the lifestyles of these microorganisms in soils.</title>
        <authorList>
            <person name="Ward N.L."/>
            <person name="Challacombe J.F."/>
            <person name="Janssen P.H."/>
            <person name="Henrissat B."/>
            <person name="Coutinho P.M."/>
            <person name="Wu M."/>
            <person name="Xie G."/>
            <person name="Haft D.H."/>
            <person name="Sait M."/>
            <person name="Badger J."/>
            <person name="Barabote R.D."/>
            <person name="Bradley B."/>
            <person name="Brettin T.S."/>
            <person name="Brinkac L.M."/>
            <person name="Bruce D."/>
            <person name="Creasy T."/>
            <person name="Daugherty S.C."/>
            <person name="Davidsen T.M."/>
            <person name="DeBoy R.T."/>
            <person name="Detter J.C."/>
            <person name="Dodson R.J."/>
            <person name="Durkin A.S."/>
            <person name="Ganapathy A."/>
            <person name="Gwinn-Giglio M."/>
            <person name="Han C.S."/>
            <person name="Khouri H."/>
            <person name="Kiss H."/>
            <person name="Kothari S.P."/>
            <person name="Madupu R."/>
            <person name="Nelson K.E."/>
            <person name="Nelson W.C."/>
            <person name="Paulsen I."/>
            <person name="Penn K."/>
            <person name="Ren Q."/>
            <person name="Rosovitz M.J."/>
            <person name="Selengut J.D."/>
            <person name="Shrivastava S."/>
            <person name="Sullivan S.A."/>
            <person name="Tapia R."/>
            <person name="Thompson L.S."/>
            <person name="Watkins K.L."/>
            <person name="Yang Q."/>
            <person name="Yu C."/>
            <person name="Zafar N."/>
            <person name="Zhou L."/>
            <person name="Kuske C.R."/>
        </authorList>
    </citation>
    <scope>NUCLEOTIDE SEQUENCE [LARGE SCALE GENOMIC DNA]</scope>
    <source>
        <strain>Ellin345</strain>
    </source>
</reference>
<feature type="chain" id="PRO_1000070210" description="Beta-ketoacyl-[acyl-carrier-protein] synthase III">
    <location>
        <begin position="1"/>
        <end position="333"/>
    </location>
</feature>
<feature type="region of interest" description="ACP-binding" evidence="1">
    <location>
        <begin position="259"/>
        <end position="263"/>
    </location>
</feature>
<feature type="active site" evidence="1">
    <location>
        <position position="116"/>
    </location>
</feature>
<feature type="active site" evidence="1">
    <location>
        <position position="258"/>
    </location>
</feature>
<feature type="active site" evidence="1">
    <location>
        <position position="288"/>
    </location>
</feature>
<keyword id="KW-0012">Acyltransferase</keyword>
<keyword id="KW-0963">Cytoplasm</keyword>
<keyword id="KW-0275">Fatty acid biosynthesis</keyword>
<keyword id="KW-0276">Fatty acid metabolism</keyword>
<keyword id="KW-0444">Lipid biosynthesis</keyword>
<keyword id="KW-0443">Lipid metabolism</keyword>
<keyword id="KW-0511">Multifunctional enzyme</keyword>
<keyword id="KW-1185">Reference proteome</keyword>
<keyword id="KW-0808">Transferase</keyword>
<organism>
    <name type="scientific">Koribacter versatilis (strain Ellin345)</name>
    <dbReference type="NCBI Taxonomy" id="204669"/>
    <lineage>
        <taxon>Bacteria</taxon>
        <taxon>Pseudomonadati</taxon>
        <taxon>Acidobacteriota</taxon>
        <taxon>Terriglobia</taxon>
        <taxon>Terriglobales</taxon>
        <taxon>Candidatus Korobacteraceae</taxon>
        <taxon>Candidatus Korobacter</taxon>
    </lineage>
</organism>
<gene>
    <name evidence="1" type="primary">fabH</name>
    <name type="ordered locus">Acid345_2017</name>
</gene>
<protein>
    <recommendedName>
        <fullName evidence="1">Beta-ketoacyl-[acyl-carrier-protein] synthase III</fullName>
        <shortName evidence="1">Beta-ketoacyl-ACP synthase III</shortName>
        <shortName evidence="1">KAS III</shortName>
        <ecNumber evidence="1">2.3.1.180</ecNumber>
    </recommendedName>
    <alternativeName>
        <fullName evidence="1">3-oxoacyl-[acyl-carrier-protein] synthase 3</fullName>
    </alternativeName>
    <alternativeName>
        <fullName evidence="1">3-oxoacyl-[acyl-carrier-protein] synthase III</fullName>
    </alternativeName>
</protein>
<name>FABH_KORVE</name>
<dbReference type="EC" id="2.3.1.180" evidence="1"/>
<dbReference type="EMBL" id="CP000360">
    <property type="protein sequence ID" value="ABF41018.1"/>
    <property type="molecule type" value="Genomic_DNA"/>
</dbReference>
<dbReference type="RefSeq" id="WP_011522819.1">
    <property type="nucleotide sequence ID" value="NC_008009.1"/>
</dbReference>
<dbReference type="SMR" id="Q1IQ32"/>
<dbReference type="STRING" id="204669.Acid345_2017"/>
<dbReference type="EnsemblBacteria" id="ABF41018">
    <property type="protein sequence ID" value="ABF41018"/>
    <property type="gene ID" value="Acid345_2017"/>
</dbReference>
<dbReference type="KEGG" id="aba:Acid345_2017"/>
<dbReference type="eggNOG" id="COG0332">
    <property type="taxonomic scope" value="Bacteria"/>
</dbReference>
<dbReference type="HOGENOM" id="CLU_039592_3_1_0"/>
<dbReference type="OrthoDB" id="9815506at2"/>
<dbReference type="UniPathway" id="UPA00094"/>
<dbReference type="Proteomes" id="UP000002432">
    <property type="component" value="Chromosome"/>
</dbReference>
<dbReference type="GO" id="GO:0005737">
    <property type="term" value="C:cytoplasm"/>
    <property type="evidence" value="ECO:0007669"/>
    <property type="project" value="UniProtKB-SubCell"/>
</dbReference>
<dbReference type="GO" id="GO:0004315">
    <property type="term" value="F:3-oxoacyl-[acyl-carrier-protein] synthase activity"/>
    <property type="evidence" value="ECO:0007669"/>
    <property type="project" value="InterPro"/>
</dbReference>
<dbReference type="GO" id="GO:0033818">
    <property type="term" value="F:beta-ketoacyl-acyl-carrier-protein synthase III activity"/>
    <property type="evidence" value="ECO:0007669"/>
    <property type="project" value="UniProtKB-UniRule"/>
</dbReference>
<dbReference type="GO" id="GO:0006633">
    <property type="term" value="P:fatty acid biosynthetic process"/>
    <property type="evidence" value="ECO:0007669"/>
    <property type="project" value="UniProtKB-UniRule"/>
</dbReference>
<dbReference type="GO" id="GO:0044550">
    <property type="term" value="P:secondary metabolite biosynthetic process"/>
    <property type="evidence" value="ECO:0007669"/>
    <property type="project" value="TreeGrafter"/>
</dbReference>
<dbReference type="CDD" id="cd00830">
    <property type="entry name" value="KAS_III"/>
    <property type="match status" value="1"/>
</dbReference>
<dbReference type="FunFam" id="3.40.47.10:FF:000004">
    <property type="entry name" value="3-oxoacyl-[acyl-carrier-protein] synthase 3"/>
    <property type="match status" value="1"/>
</dbReference>
<dbReference type="Gene3D" id="3.40.47.10">
    <property type="match status" value="1"/>
</dbReference>
<dbReference type="HAMAP" id="MF_01815">
    <property type="entry name" value="FabH"/>
    <property type="match status" value="1"/>
</dbReference>
<dbReference type="InterPro" id="IPR013747">
    <property type="entry name" value="ACP_syn_III_C"/>
</dbReference>
<dbReference type="InterPro" id="IPR013751">
    <property type="entry name" value="ACP_syn_III_N"/>
</dbReference>
<dbReference type="InterPro" id="IPR004655">
    <property type="entry name" value="FabH"/>
</dbReference>
<dbReference type="InterPro" id="IPR016039">
    <property type="entry name" value="Thiolase-like"/>
</dbReference>
<dbReference type="NCBIfam" id="TIGR00747">
    <property type="entry name" value="fabH"/>
    <property type="match status" value="1"/>
</dbReference>
<dbReference type="NCBIfam" id="NF006829">
    <property type="entry name" value="PRK09352.1"/>
    <property type="match status" value="1"/>
</dbReference>
<dbReference type="PANTHER" id="PTHR34069">
    <property type="entry name" value="3-OXOACYL-[ACYL-CARRIER-PROTEIN] SYNTHASE 3"/>
    <property type="match status" value="1"/>
</dbReference>
<dbReference type="PANTHER" id="PTHR34069:SF2">
    <property type="entry name" value="BETA-KETOACYL-[ACYL-CARRIER-PROTEIN] SYNTHASE III"/>
    <property type="match status" value="1"/>
</dbReference>
<dbReference type="Pfam" id="PF08545">
    <property type="entry name" value="ACP_syn_III"/>
    <property type="match status" value="1"/>
</dbReference>
<dbReference type="Pfam" id="PF08541">
    <property type="entry name" value="ACP_syn_III_C"/>
    <property type="match status" value="1"/>
</dbReference>
<dbReference type="SUPFAM" id="SSF53901">
    <property type="entry name" value="Thiolase-like"/>
    <property type="match status" value="1"/>
</dbReference>
<accession>Q1IQ32</accession>
<evidence type="ECO:0000255" key="1">
    <source>
        <dbReference type="HAMAP-Rule" id="MF_01815"/>
    </source>
</evidence>
<sequence>MTSVRRAKITALGTYVPPRVLSNFDLEKMVDTTNQWILERTGIRERHLVDKGVAASDLAVEAAKKCLANRGIEAAEVECIVVGTVTPDMMYPSTACLVQHKLGIPNAWGFDVSAGCSGFLFSLTTGAKFIESGQYKKVLVIGSDVNSSMIDYTDRATCIIFGDGAGAVLLEPTEDGEDVGVMDHIHQVEGVGGQYLYMPGGGSLNPASHETIDQKMHYVHQDGQNVFKYAVKKMSEMTEKVLKRNSLTGTDVDCFIAHQANKRIIVATAERLKMPMEKVIINIEKYGNTTAGTIPLAMQTALDEGKLKKGSNVLLAAVGAGFTSGATLLRWAF</sequence>
<proteinExistence type="inferred from homology"/>
<comment type="function">
    <text evidence="1">Catalyzes the condensation reaction of fatty acid synthesis by the addition to an acyl acceptor of two carbons from malonyl-ACP. Catalyzes the first condensation reaction which initiates fatty acid synthesis and may therefore play a role in governing the total rate of fatty acid production. Possesses both acetoacetyl-ACP synthase and acetyl transacylase activities. Its substrate specificity determines the biosynthesis of branched-chain and/or straight-chain of fatty acids.</text>
</comment>
<comment type="catalytic activity">
    <reaction evidence="1">
        <text>malonyl-[ACP] + acetyl-CoA + H(+) = 3-oxobutanoyl-[ACP] + CO2 + CoA</text>
        <dbReference type="Rhea" id="RHEA:12080"/>
        <dbReference type="Rhea" id="RHEA-COMP:9623"/>
        <dbReference type="Rhea" id="RHEA-COMP:9625"/>
        <dbReference type="ChEBI" id="CHEBI:15378"/>
        <dbReference type="ChEBI" id="CHEBI:16526"/>
        <dbReference type="ChEBI" id="CHEBI:57287"/>
        <dbReference type="ChEBI" id="CHEBI:57288"/>
        <dbReference type="ChEBI" id="CHEBI:78449"/>
        <dbReference type="ChEBI" id="CHEBI:78450"/>
        <dbReference type="EC" id="2.3.1.180"/>
    </reaction>
</comment>
<comment type="pathway">
    <text evidence="1">Lipid metabolism; fatty acid biosynthesis.</text>
</comment>
<comment type="subunit">
    <text evidence="1">Homodimer.</text>
</comment>
<comment type="subcellular location">
    <subcellularLocation>
        <location evidence="1">Cytoplasm</location>
    </subcellularLocation>
</comment>
<comment type="domain">
    <text evidence="1">The last Arg residue of the ACP-binding site is essential for the weak association between ACP/AcpP and FabH.</text>
</comment>
<comment type="similarity">
    <text evidence="1">Belongs to the thiolase-like superfamily. FabH family.</text>
</comment>